<organism>
    <name type="scientific">Escherichia coli (strain 55989 / EAEC)</name>
    <dbReference type="NCBI Taxonomy" id="585055"/>
    <lineage>
        <taxon>Bacteria</taxon>
        <taxon>Pseudomonadati</taxon>
        <taxon>Pseudomonadota</taxon>
        <taxon>Gammaproteobacteria</taxon>
        <taxon>Enterobacterales</taxon>
        <taxon>Enterobacteriaceae</taxon>
        <taxon>Escherichia</taxon>
    </lineage>
</organism>
<feature type="signal peptide" evidence="1">
    <location>
        <begin position="1"/>
        <end position="16"/>
    </location>
</feature>
<feature type="chain" id="PRO_1000149732" description="UPF0257 lipoprotein YnfC">
    <location>
        <begin position="17"/>
        <end position="236"/>
    </location>
</feature>
<feature type="lipid moiety-binding region" description="N-palmitoyl cysteine" evidence="1">
    <location>
        <position position="17"/>
    </location>
</feature>
<feature type="lipid moiety-binding region" description="S-diacylglycerol cysteine" evidence="1">
    <location>
        <position position="17"/>
    </location>
</feature>
<comment type="subcellular location">
    <subcellularLocation>
        <location evidence="1">Cell membrane</location>
        <topology evidence="1">Lipid-anchor</topology>
    </subcellularLocation>
</comment>
<comment type="similarity">
    <text evidence="1">Belongs to the UPF0257 family.</text>
</comment>
<gene>
    <name evidence="1" type="primary">ynfC</name>
    <name type="ordered locus">EC55989_1750</name>
</gene>
<evidence type="ECO:0000255" key="1">
    <source>
        <dbReference type="HAMAP-Rule" id="MF_01065"/>
    </source>
</evidence>
<name>YNFC_ECO55</name>
<protein>
    <recommendedName>
        <fullName evidence="1">UPF0257 lipoprotein YnfC</fullName>
    </recommendedName>
</protein>
<reference key="1">
    <citation type="journal article" date="2009" name="PLoS Genet.">
        <title>Organised genome dynamics in the Escherichia coli species results in highly diverse adaptive paths.</title>
        <authorList>
            <person name="Touchon M."/>
            <person name="Hoede C."/>
            <person name="Tenaillon O."/>
            <person name="Barbe V."/>
            <person name="Baeriswyl S."/>
            <person name="Bidet P."/>
            <person name="Bingen E."/>
            <person name="Bonacorsi S."/>
            <person name="Bouchier C."/>
            <person name="Bouvet O."/>
            <person name="Calteau A."/>
            <person name="Chiapello H."/>
            <person name="Clermont O."/>
            <person name="Cruveiller S."/>
            <person name="Danchin A."/>
            <person name="Diard M."/>
            <person name="Dossat C."/>
            <person name="Karoui M.E."/>
            <person name="Frapy E."/>
            <person name="Garry L."/>
            <person name="Ghigo J.M."/>
            <person name="Gilles A.M."/>
            <person name="Johnson J."/>
            <person name="Le Bouguenec C."/>
            <person name="Lescat M."/>
            <person name="Mangenot S."/>
            <person name="Martinez-Jehanne V."/>
            <person name="Matic I."/>
            <person name="Nassif X."/>
            <person name="Oztas S."/>
            <person name="Petit M.A."/>
            <person name="Pichon C."/>
            <person name="Rouy Z."/>
            <person name="Ruf C.S."/>
            <person name="Schneider D."/>
            <person name="Tourret J."/>
            <person name="Vacherie B."/>
            <person name="Vallenet D."/>
            <person name="Medigue C."/>
            <person name="Rocha E.P.C."/>
            <person name="Denamur E."/>
        </authorList>
    </citation>
    <scope>NUCLEOTIDE SEQUENCE [LARGE SCALE GENOMIC DNA]</scope>
    <source>
        <strain>55989 / EAEC</strain>
    </source>
</reference>
<dbReference type="EMBL" id="CU928145">
    <property type="protein sequence ID" value="CAU97604.1"/>
    <property type="molecule type" value="Genomic_DNA"/>
</dbReference>
<dbReference type="RefSeq" id="WP_001321287.1">
    <property type="nucleotide sequence ID" value="NC_011748.1"/>
</dbReference>
<dbReference type="SMR" id="B7L5D7"/>
<dbReference type="KEGG" id="eck:EC55989_1750"/>
<dbReference type="HOGENOM" id="CLU_1174761_0_0_6"/>
<dbReference type="Proteomes" id="UP000000746">
    <property type="component" value="Chromosome"/>
</dbReference>
<dbReference type="GO" id="GO:0005886">
    <property type="term" value="C:plasma membrane"/>
    <property type="evidence" value="ECO:0007669"/>
    <property type="project" value="UniProtKB-SubCell"/>
</dbReference>
<dbReference type="HAMAP" id="MF_01065">
    <property type="entry name" value="UPF0257"/>
    <property type="match status" value="1"/>
</dbReference>
<dbReference type="InterPro" id="IPR010646">
    <property type="entry name" value="UPF0257"/>
</dbReference>
<dbReference type="NCBIfam" id="NF002798">
    <property type="entry name" value="PRK02939.1"/>
    <property type="match status" value="1"/>
</dbReference>
<dbReference type="Pfam" id="PF06788">
    <property type="entry name" value="UPF0257"/>
    <property type="match status" value="1"/>
</dbReference>
<dbReference type="PROSITE" id="PS51257">
    <property type="entry name" value="PROKAR_LIPOPROTEIN"/>
    <property type="match status" value="1"/>
</dbReference>
<sequence length="236" mass="26507">MKYKLLPCLLAIFLTGCDRTEVTLSFTPEMASFSNEFDFDPLRGPVKDFTQTLMDEQGEVTKRVSGTLSEEGCFDSLELLDLENNTVVALVLDANYYRDAETLEKRVRLQGKCQLAELPSAGVSWETDDNGFVIKASSKQMQMEYRYDDQGYPLGKTTKSNDKTLSVSATPSTDPIKKLDYTAVTLLNNQRVGNVKQSCEYDSHANPVDCQLIIVDEGVKPAVERVYTIKNTIDYY</sequence>
<proteinExistence type="inferred from homology"/>
<accession>B7L5D7</accession>
<keyword id="KW-1003">Cell membrane</keyword>
<keyword id="KW-0449">Lipoprotein</keyword>
<keyword id="KW-0472">Membrane</keyword>
<keyword id="KW-0564">Palmitate</keyword>
<keyword id="KW-1185">Reference proteome</keyword>
<keyword id="KW-0732">Signal</keyword>